<proteinExistence type="evidence at transcript level"/>
<name>TYSY_BOVIN</name>
<protein>
    <recommendedName>
        <fullName>Thymidylate synthase</fullName>
        <shortName>TS</shortName>
        <shortName>TSase</shortName>
        <ecNumber evidence="1">2.1.1.45</ecNumber>
    </recommendedName>
</protein>
<dbReference type="EC" id="2.1.1.45" evidence="1"/>
<dbReference type="EMBL" id="BC111139">
    <property type="protein sequence ID" value="AAI11140.1"/>
    <property type="molecule type" value="mRNA"/>
</dbReference>
<dbReference type="EMBL" id="AH009263">
    <property type="protein sequence ID" value="AAF66224.1"/>
    <property type="molecule type" value="Genomic_DNA"/>
</dbReference>
<dbReference type="RefSeq" id="NP_001032905.1">
    <property type="nucleotide sequence ID" value="NM_001037816.1"/>
</dbReference>
<dbReference type="SMR" id="Q2TA32"/>
<dbReference type="FunCoup" id="Q2TA32">
    <property type="interactions" value="1613"/>
</dbReference>
<dbReference type="STRING" id="9913.ENSBTAP00000009214"/>
<dbReference type="BindingDB" id="Q2TA32"/>
<dbReference type="ChEMBL" id="CHEMBL3243905"/>
<dbReference type="PaxDb" id="9913-ENSBTAP00000009214"/>
<dbReference type="GeneID" id="507631"/>
<dbReference type="KEGG" id="bta:507631"/>
<dbReference type="CTD" id="7298"/>
<dbReference type="eggNOG" id="KOG0673">
    <property type="taxonomic scope" value="Eukaryota"/>
</dbReference>
<dbReference type="InParanoid" id="Q2TA32"/>
<dbReference type="OrthoDB" id="766at2759"/>
<dbReference type="UniPathway" id="UPA00575"/>
<dbReference type="Proteomes" id="UP000009136">
    <property type="component" value="Unplaced"/>
</dbReference>
<dbReference type="GO" id="GO:0005737">
    <property type="term" value="C:cytoplasm"/>
    <property type="evidence" value="ECO:0000250"/>
    <property type="project" value="UniProtKB"/>
</dbReference>
<dbReference type="GO" id="GO:0005829">
    <property type="term" value="C:cytosol"/>
    <property type="evidence" value="ECO:0000318"/>
    <property type="project" value="GO_Central"/>
</dbReference>
<dbReference type="GO" id="GO:0005743">
    <property type="term" value="C:mitochondrial inner membrane"/>
    <property type="evidence" value="ECO:0000250"/>
    <property type="project" value="UniProtKB"/>
</dbReference>
<dbReference type="GO" id="GO:0005759">
    <property type="term" value="C:mitochondrial matrix"/>
    <property type="evidence" value="ECO:0000250"/>
    <property type="project" value="UniProtKB"/>
</dbReference>
<dbReference type="GO" id="GO:0005739">
    <property type="term" value="C:mitochondrion"/>
    <property type="evidence" value="ECO:0000250"/>
    <property type="project" value="UniProtKB"/>
</dbReference>
<dbReference type="GO" id="GO:0005634">
    <property type="term" value="C:nucleus"/>
    <property type="evidence" value="ECO:0000250"/>
    <property type="project" value="UniProtKB"/>
</dbReference>
<dbReference type="GO" id="GO:0004799">
    <property type="term" value="F:thymidylate synthase activity"/>
    <property type="evidence" value="ECO:0000318"/>
    <property type="project" value="GO_Central"/>
</dbReference>
<dbReference type="GO" id="GO:0006231">
    <property type="term" value="P:dTMP biosynthetic process"/>
    <property type="evidence" value="ECO:0000318"/>
    <property type="project" value="GO_Central"/>
</dbReference>
<dbReference type="GO" id="GO:0006235">
    <property type="term" value="P:dTTP biosynthetic process"/>
    <property type="evidence" value="ECO:0007669"/>
    <property type="project" value="UniProtKB-UniPathway"/>
</dbReference>
<dbReference type="GO" id="GO:0032259">
    <property type="term" value="P:methylation"/>
    <property type="evidence" value="ECO:0007669"/>
    <property type="project" value="UniProtKB-KW"/>
</dbReference>
<dbReference type="CDD" id="cd00351">
    <property type="entry name" value="TS_Pyrimidine_HMase"/>
    <property type="match status" value="1"/>
</dbReference>
<dbReference type="FunFam" id="3.30.572.10:FF:000008">
    <property type="entry name" value="thymidylate synthase isoform X2"/>
    <property type="match status" value="1"/>
</dbReference>
<dbReference type="Gene3D" id="3.30.572.10">
    <property type="entry name" value="Thymidylate synthase/dCMP hydroxymethylase domain"/>
    <property type="match status" value="1"/>
</dbReference>
<dbReference type="HAMAP" id="MF_00008">
    <property type="entry name" value="Thymidy_synth_bact"/>
    <property type="match status" value="1"/>
</dbReference>
<dbReference type="InterPro" id="IPR045097">
    <property type="entry name" value="Thymidate_synth/dCMP_Mease"/>
</dbReference>
<dbReference type="InterPro" id="IPR023451">
    <property type="entry name" value="Thymidate_synth/dCMP_Mease_dom"/>
</dbReference>
<dbReference type="InterPro" id="IPR036926">
    <property type="entry name" value="Thymidate_synth/dCMP_Mease_sf"/>
</dbReference>
<dbReference type="InterPro" id="IPR000398">
    <property type="entry name" value="Thymidylate_synthase"/>
</dbReference>
<dbReference type="InterPro" id="IPR020940">
    <property type="entry name" value="Thymidylate_synthase_AS"/>
</dbReference>
<dbReference type="NCBIfam" id="TIGR03284">
    <property type="entry name" value="thym_sym"/>
    <property type="match status" value="1"/>
</dbReference>
<dbReference type="PANTHER" id="PTHR11548:SF2">
    <property type="entry name" value="THYMIDYLATE SYNTHASE"/>
    <property type="match status" value="1"/>
</dbReference>
<dbReference type="PANTHER" id="PTHR11548">
    <property type="entry name" value="THYMIDYLATE SYNTHASE 1"/>
    <property type="match status" value="1"/>
</dbReference>
<dbReference type="Pfam" id="PF00303">
    <property type="entry name" value="Thymidylat_synt"/>
    <property type="match status" value="2"/>
</dbReference>
<dbReference type="PRINTS" id="PR00108">
    <property type="entry name" value="THYMDSNTHASE"/>
</dbReference>
<dbReference type="SUPFAM" id="SSF55831">
    <property type="entry name" value="Thymidylate synthase/dCMP hydroxymethylase"/>
    <property type="match status" value="2"/>
</dbReference>
<dbReference type="PROSITE" id="PS00091">
    <property type="entry name" value="THYMIDYLATE_SYNTHASE"/>
    <property type="match status" value="1"/>
</dbReference>
<evidence type="ECO:0000250" key="1">
    <source>
        <dbReference type="UniProtKB" id="P04818"/>
    </source>
</evidence>
<evidence type="ECO:0000250" key="2">
    <source>
        <dbReference type="UniProtKB" id="P0A884"/>
    </source>
</evidence>
<evidence type="ECO:0000250" key="3">
    <source>
        <dbReference type="UniProtKB" id="P45352"/>
    </source>
</evidence>
<evidence type="ECO:0000256" key="4">
    <source>
        <dbReference type="SAM" id="MobiDB-lite"/>
    </source>
</evidence>
<evidence type="ECO:0000305" key="5"/>
<reference key="1">
    <citation type="submission" date="2005-12" db="EMBL/GenBank/DDBJ databases">
        <authorList>
            <consortium name="NIH - Mammalian Gene Collection (MGC) project"/>
        </authorList>
    </citation>
    <scope>NUCLEOTIDE SEQUENCE [LARGE SCALE MRNA]</scope>
    <source>
        <strain>Crossbred X Angus</strain>
        <tissue>Liver</tissue>
    </source>
</reference>
<reference key="2">
    <citation type="journal article" date="2000" name="Mamm. Genome">
        <title>Estimate of nucleotide diversity in dogs with a pool-and-sequence method.</title>
        <authorList>
            <person name="Brouillette J.A."/>
            <person name="Andrew J.R."/>
            <person name="Venta P.J."/>
        </authorList>
    </citation>
    <scope>NUCLEOTIDE SEQUENCE [GENOMIC DNA] OF 211-255</scope>
</reference>
<feature type="chain" id="PRO_0000317541" description="Thymidylate synthase">
    <location>
        <begin position="1"/>
        <end position="354"/>
    </location>
</feature>
<feature type="region of interest" description="Disordered" evidence="4">
    <location>
        <begin position="1"/>
        <end position="32"/>
    </location>
</feature>
<feature type="active site" description="Nucleophile" evidence="2">
    <location>
        <position position="198"/>
    </location>
</feature>
<feature type="binding site" description="in other chain" evidence="2">
    <location>
        <position position="53"/>
    </location>
    <ligand>
        <name>dUMP</name>
        <dbReference type="ChEBI" id="CHEBI:246422"/>
        <note>ligand shared between dimeric partners</note>
    </ligand>
</feature>
<feature type="binding site" evidence="2">
    <location>
        <begin position="178"/>
        <end position="179"/>
    </location>
    <ligand>
        <name>dUMP</name>
        <dbReference type="ChEBI" id="CHEBI:246422"/>
        <note>ligand shared between dimeric partners</note>
    </ligand>
</feature>
<feature type="binding site" description="in other chain" evidence="2">
    <location>
        <begin position="218"/>
        <end position="221"/>
    </location>
    <ligand>
        <name>dUMP</name>
        <dbReference type="ChEBI" id="CHEBI:246422"/>
        <note>ligand shared between dimeric partners</note>
    </ligand>
</feature>
<feature type="binding site" evidence="2">
    <location>
        <position position="221"/>
    </location>
    <ligand>
        <name>(6R)-5,10-methylene-5,6,7,8-tetrahydrofolate</name>
        <dbReference type="ChEBI" id="CHEBI:15636"/>
    </ligand>
</feature>
<feature type="binding site" description="in other chain" evidence="2">
    <location>
        <position position="229"/>
    </location>
    <ligand>
        <name>dUMP</name>
        <dbReference type="ChEBI" id="CHEBI:246422"/>
        <note>ligand shared between dimeric partners</note>
    </ligand>
</feature>
<feature type="binding site" description="in other chain" evidence="2">
    <location>
        <begin position="259"/>
        <end position="261"/>
    </location>
    <ligand>
        <name>dUMP</name>
        <dbReference type="ChEBI" id="CHEBI:246422"/>
        <note>ligand shared between dimeric partners</note>
    </ligand>
</feature>
<feature type="binding site" evidence="2">
    <location>
        <position position="353"/>
    </location>
    <ligand>
        <name>(6R)-5,10-methylene-5,6,7,8-tetrahydrofolate</name>
        <dbReference type="ChEBI" id="CHEBI:15636"/>
    </ligand>
</feature>
<feature type="modified residue" description="Phosphoserine" evidence="1">
    <location>
        <position position="117"/>
    </location>
</feature>
<feature type="cross-link" description="Glycyl lysine isopeptide (Lys-Gly) (interchain with G-Cter in SUMO2)" evidence="1">
    <location>
        <position position="349"/>
    </location>
</feature>
<comment type="function">
    <text evidence="1">Catalyzes the reductive methylation of 2'-deoxyuridine 5'-monophosphate (dUMP) to thymidine 5'-monophosphate (dTMP), using the cosubstrate, 5,10- methylenetetrahydrofolate (CH2H4folate) as a 1-carbon donor and reductant and contributes to the de novo mitochondrial thymidylate biosynthesis pathway.</text>
</comment>
<comment type="catalytic activity">
    <reaction evidence="1">
        <text>dUMP + (6R)-5,10-methylene-5,6,7,8-tetrahydrofolate = 7,8-dihydrofolate + dTMP</text>
        <dbReference type="Rhea" id="RHEA:12104"/>
        <dbReference type="ChEBI" id="CHEBI:15636"/>
        <dbReference type="ChEBI" id="CHEBI:57451"/>
        <dbReference type="ChEBI" id="CHEBI:63528"/>
        <dbReference type="ChEBI" id="CHEBI:246422"/>
        <dbReference type="EC" id="2.1.1.45"/>
    </reaction>
    <physiologicalReaction direction="left-to-right" evidence="1">
        <dbReference type="Rhea" id="RHEA:12105"/>
    </physiologicalReaction>
</comment>
<comment type="pathway">
    <text evidence="1">Pyrimidine metabolism; dTTP biosynthesis.</text>
</comment>
<comment type="subunit">
    <text evidence="3">Homodimer.</text>
</comment>
<comment type="subcellular location">
    <subcellularLocation>
        <location evidence="1">Nucleus</location>
    </subcellularLocation>
    <subcellularLocation>
        <location evidence="1">Cytoplasm</location>
    </subcellularLocation>
    <subcellularLocation>
        <location evidence="1">Mitochondrion</location>
    </subcellularLocation>
    <subcellularLocation>
        <location evidence="1">Mitochondrion matrix</location>
    </subcellularLocation>
    <subcellularLocation>
        <location evidence="1">Mitochondrion inner membrane</location>
    </subcellularLocation>
</comment>
<comment type="similarity">
    <text evidence="5">Belongs to the thymidylate synthase family.</text>
</comment>
<organism>
    <name type="scientific">Bos taurus</name>
    <name type="common">Bovine</name>
    <dbReference type="NCBI Taxonomy" id="9913"/>
    <lineage>
        <taxon>Eukaryota</taxon>
        <taxon>Metazoa</taxon>
        <taxon>Chordata</taxon>
        <taxon>Craniata</taxon>
        <taxon>Vertebrata</taxon>
        <taxon>Euteleostomi</taxon>
        <taxon>Mammalia</taxon>
        <taxon>Eutheria</taxon>
        <taxon>Laurasiatheria</taxon>
        <taxon>Artiodactyla</taxon>
        <taxon>Ruminantia</taxon>
        <taxon>Pecora</taxon>
        <taxon>Bovidae</taxon>
        <taxon>Bovinae</taxon>
        <taxon>Bos</taxon>
    </lineage>
</organism>
<accession>Q2TA32</accession>
<accession>Q9N1D3</accession>
<gene>
    <name type="primary">TYMS</name>
    <name type="synonym">TS</name>
</gene>
<sequence length="354" mass="39785">MPAAGSEPSRPPSPPGVQEQSAEPRPPPPPHGELQYLGQIEHILRCGFRRDDRTGTGTLSVFGMQARYNLRDEFPLLTTKRVFWKGVLEELLWFIKGSTNAKELSSKGVKIWDANGSRDFLDGLGFSDRAEGDLGPVYGFQWRHFGAEYKDMDSEYSGQGVDQLQKVIDTIKTNPNDRRIILCAWNPKDLPLMALPPCHALCQFYVVNGELSCQLYQRSGDMGLGVPFNIASYALLTYMIAHITDLKPGDFVHTLGDAHIYLNHIEPLKTQALMELRGQSSRSLDGDGQAGTSRWAPVATDTERDRCCELQREPRPFPKLKILRKVETIDDFQAEDFQIEGYNPNPTIKMEMAV</sequence>
<keyword id="KW-0963">Cytoplasm</keyword>
<keyword id="KW-1017">Isopeptide bond</keyword>
<keyword id="KW-0472">Membrane</keyword>
<keyword id="KW-0489">Methyltransferase</keyword>
<keyword id="KW-0496">Mitochondrion</keyword>
<keyword id="KW-0999">Mitochondrion inner membrane</keyword>
<keyword id="KW-0545">Nucleotide biosynthesis</keyword>
<keyword id="KW-0539">Nucleus</keyword>
<keyword id="KW-0597">Phosphoprotein</keyword>
<keyword id="KW-1185">Reference proteome</keyword>
<keyword id="KW-0808">Transferase</keyword>
<keyword id="KW-0832">Ubl conjugation</keyword>